<sequence>MESFILLFTNDKLLIFNFIIILLFIKSLSYIIPLIIAIAYLTLIERKIIGSIQKRKGPNIVGIFGLLQPIADGLKLLLKETSLPNSANIFIFIIAPILTFFLALCAWAIMPFNEINFYSNLNIGILYLLAISSLGVYGIIISGWASNSKYAFLGGLRSAAQIISYEVSIGLIIINVLLCSGTLNLKEIVLAQQNIWYIFPLFPLFLMFFISSLAETNRSPFDLPEAEAELVAGYNVEYSAMGFALFFLGEYTNIILISAVSTILFLAGWLPPFDIFLFNWIPNSIWFGFKTIIILVLFIWVRAAFPRYRYDQLIQLGWKIFLPLSLAWLMLTSGILLSYDGFPN</sequence>
<gene>
    <name type="primary">ND1</name>
    <name type="synonym">NAD1</name>
</gene>
<dbReference type="EC" id="7.1.1.2"/>
<dbReference type="EMBL" id="Z48930">
    <property type="protein sequence ID" value="CAA88775.1"/>
    <property type="molecule type" value="Genomic_DNA"/>
</dbReference>
<dbReference type="PIR" id="S62765">
    <property type="entry name" value="S62765"/>
</dbReference>
<dbReference type="SMR" id="P48899"/>
<dbReference type="GO" id="GO:0005743">
    <property type="term" value="C:mitochondrial inner membrane"/>
    <property type="evidence" value="ECO:0007669"/>
    <property type="project" value="UniProtKB-SubCell"/>
</dbReference>
<dbReference type="GO" id="GO:0008137">
    <property type="term" value="F:NADH dehydrogenase (ubiquinone) activity"/>
    <property type="evidence" value="ECO:0007669"/>
    <property type="project" value="UniProtKB-EC"/>
</dbReference>
<dbReference type="GO" id="GO:0009060">
    <property type="term" value="P:aerobic respiration"/>
    <property type="evidence" value="ECO:0007669"/>
    <property type="project" value="TreeGrafter"/>
</dbReference>
<dbReference type="HAMAP" id="MF_01350">
    <property type="entry name" value="NDH1_NuoH"/>
    <property type="match status" value="1"/>
</dbReference>
<dbReference type="InterPro" id="IPR001694">
    <property type="entry name" value="NADH_UbQ_OxRdtase_su1/FPO"/>
</dbReference>
<dbReference type="InterPro" id="IPR018086">
    <property type="entry name" value="NADH_UbQ_OxRdtase_su1_CS"/>
</dbReference>
<dbReference type="NCBIfam" id="NF004741">
    <property type="entry name" value="PRK06076.1-2"/>
    <property type="match status" value="1"/>
</dbReference>
<dbReference type="NCBIfam" id="NF004745">
    <property type="entry name" value="PRK06076.1-6"/>
    <property type="match status" value="1"/>
</dbReference>
<dbReference type="PANTHER" id="PTHR11432">
    <property type="entry name" value="NADH DEHYDROGENASE SUBUNIT 1"/>
    <property type="match status" value="1"/>
</dbReference>
<dbReference type="PANTHER" id="PTHR11432:SF3">
    <property type="entry name" value="NADH-UBIQUINONE OXIDOREDUCTASE CHAIN 1"/>
    <property type="match status" value="1"/>
</dbReference>
<dbReference type="Pfam" id="PF00146">
    <property type="entry name" value="NADHdh"/>
    <property type="match status" value="1"/>
</dbReference>
<dbReference type="PROSITE" id="PS00667">
    <property type="entry name" value="COMPLEX1_ND1_1"/>
    <property type="match status" value="1"/>
</dbReference>
<dbReference type="PROSITE" id="PS00668">
    <property type="entry name" value="COMPLEX1_ND1_2"/>
    <property type="match status" value="1"/>
</dbReference>
<evidence type="ECO:0000250" key="1"/>
<evidence type="ECO:0000255" key="2"/>
<evidence type="ECO:0000305" key="3"/>
<feature type="chain" id="PRO_0000117375" description="NADH-ubiquinone oxidoreductase chain 1">
    <location>
        <begin position="1"/>
        <end position="344"/>
    </location>
</feature>
<feature type="transmembrane region" description="Helical" evidence="2">
    <location>
        <begin position="18"/>
        <end position="38"/>
    </location>
</feature>
<feature type="transmembrane region" description="Helical" evidence="2">
    <location>
        <begin position="58"/>
        <end position="78"/>
    </location>
</feature>
<feature type="transmembrane region" description="Helical" evidence="2">
    <location>
        <begin position="89"/>
        <end position="109"/>
    </location>
</feature>
<feature type="transmembrane region" description="Helical" evidence="2">
    <location>
        <begin position="123"/>
        <end position="143"/>
    </location>
</feature>
<feature type="transmembrane region" description="Helical" evidence="2">
    <location>
        <begin position="159"/>
        <end position="179"/>
    </location>
</feature>
<feature type="transmembrane region" description="Helical" evidence="2">
    <location>
        <begin position="195"/>
        <end position="215"/>
    </location>
</feature>
<feature type="transmembrane region" description="Helical" evidence="2">
    <location>
        <begin position="228"/>
        <end position="248"/>
    </location>
</feature>
<feature type="transmembrane region" description="Helical" evidence="2">
    <location>
        <begin position="253"/>
        <end position="273"/>
    </location>
</feature>
<feature type="transmembrane region" description="Helical" evidence="2">
    <location>
        <begin position="281"/>
        <end position="301"/>
    </location>
</feature>
<feature type="transmembrane region" description="Helical" evidence="2">
    <location>
        <begin position="316"/>
        <end position="336"/>
    </location>
</feature>
<keyword id="KW-0249">Electron transport</keyword>
<keyword id="KW-0472">Membrane</keyword>
<keyword id="KW-0496">Mitochondrion</keyword>
<keyword id="KW-0999">Mitochondrion inner membrane</keyword>
<keyword id="KW-0520">NAD</keyword>
<keyword id="KW-0679">Respiratory chain</keyword>
<keyword id="KW-1278">Translocase</keyword>
<keyword id="KW-0812">Transmembrane</keyword>
<keyword id="KW-1133">Transmembrane helix</keyword>
<keyword id="KW-0813">Transport</keyword>
<keyword id="KW-0830">Ubiquinone</keyword>
<name>NU1M_CYACA</name>
<proteinExistence type="inferred from homology"/>
<accession>P48899</accession>
<reference key="1">
    <citation type="thesis" date="1995" institute="Justus Liebig University / Frankfurt" country="Germany">
        <authorList>
            <person name="Viehmann S."/>
        </authorList>
    </citation>
    <scope>NUCLEOTIDE SEQUENCE [GENOMIC DNA]</scope>
    <source>
        <strain>RK-1</strain>
    </source>
</reference>
<geneLocation type="mitochondrion"/>
<protein>
    <recommendedName>
        <fullName>NADH-ubiquinone oxidoreductase chain 1</fullName>
        <ecNumber>7.1.1.2</ecNumber>
    </recommendedName>
    <alternativeName>
        <fullName>NADH dehydrogenase subunit 1</fullName>
    </alternativeName>
</protein>
<comment type="function">
    <text evidence="1">Core subunit of the mitochondrial membrane respiratory chain NADH dehydrogenase (Complex I) that is believed to belong to the minimal assembly required for catalysis. Complex I functions in the transfer of electrons from NADH to the respiratory chain. The immediate electron acceptor for the enzyme is believed to be ubiquinone (By similarity).</text>
</comment>
<comment type="catalytic activity">
    <reaction>
        <text>a ubiquinone + NADH + 5 H(+)(in) = a ubiquinol + NAD(+) + 4 H(+)(out)</text>
        <dbReference type="Rhea" id="RHEA:29091"/>
        <dbReference type="Rhea" id="RHEA-COMP:9565"/>
        <dbReference type="Rhea" id="RHEA-COMP:9566"/>
        <dbReference type="ChEBI" id="CHEBI:15378"/>
        <dbReference type="ChEBI" id="CHEBI:16389"/>
        <dbReference type="ChEBI" id="CHEBI:17976"/>
        <dbReference type="ChEBI" id="CHEBI:57540"/>
        <dbReference type="ChEBI" id="CHEBI:57945"/>
        <dbReference type="EC" id="7.1.1.2"/>
    </reaction>
</comment>
<comment type="subcellular location">
    <subcellularLocation>
        <location evidence="1">Mitochondrion inner membrane</location>
        <topology evidence="1">Multi-pass membrane protein</topology>
    </subcellularLocation>
</comment>
<comment type="similarity">
    <text evidence="3">Belongs to the complex I subunit 1 family.</text>
</comment>
<organism>
    <name type="scientific">Cyanidium caldarium</name>
    <name type="common">Red alga</name>
    <dbReference type="NCBI Taxonomy" id="2771"/>
    <lineage>
        <taxon>Eukaryota</taxon>
        <taxon>Rhodophyta</taxon>
        <taxon>Bangiophyceae</taxon>
        <taxon>Cyanidiales</taxon>
        <taxon>Cyanidiaceae</taxon>
        <taxon>Cyanidium</taxon>
    </lineage>
</organism>